<dbReference type="EMBL" id="CP000038">
    <property type="protein sequence ID" value="AAZ89445.1"/>
    <property type="molecule type" value="Genomic_DNA"/>
</dbReference>
<dbReference type="RefSeq" id="WP_000906486.1">
    <property type="nucleotide sequence ID" value="NC_007384.1"/>
</dbReference>
<dbReference type="SMR" id="Q3YYG7"/>
<dbReference type="GeneID" id="98389839"/>
<dbReference type="KEGG" id="ssn:SSON_2840"/>
<dbReference type="HOGENOM" id="CLU_164837_2_1_6"/>
<dbReference type="Proteomes" id="UP000002529">
    <property type="component" value="Chromosome"/>
</dbReference>
<dbReference type="GO" id="GO:0005829">
    <property type="term" value="C:cytosol"/>
    <property type="evidence" value="ECO:0007669"/>
    <property type="project" value="TreeGrafter"/>
</dbReference>
<dbReference type="GO" id="GO:0048027">
    <property type="term" value="F:mRNA 5'-UTR binding"/>
    <property type="evidence" value="ECO:0007669"/>
    <property type="project" value="UniProtKB-UniRule"/>
</dbReference>
<dbReference type="GO" id="GO:0006402">
    <property type="term" value="P:mRNA catabolic process"/>
    <property type="evidence" value="ECO:0007669"/>
    <property type="project" value="InterPro"/>
</dbReference>
<dbReference type="GO" id="GO:0045947">
    <property type="term" value="P:negative regulation of translational initiation"/>
    <property type="evidence" value="ECO:0007669"/>
    <property type="project" value="UniProtKB-UniRule"/>
</dbReference>
<dbReference type="GO" id="GO:0045948">
    <property type="term" value="P:positive regulation of translational initiation"/>
    <property type="evidence" value="ECO:0007669"/>
    <property type="project" value="UniProtKB-UniRule"/>
</dbReference>
<dbReference type="GO" id="GO:0006109">
    <property type="term" value="P:regulation of carbohydrate metabolic process"/>
    <property type="evidence" value="ECO:0007669"/>
    <property type="project" value="UniProtKB-UniRule"/>
</dbReference>
<dbReference type="FunFam" id="2.60.40.4380:FF:000001">
    <property type="entry name" value="Translational regulator CsrA"/>
    <property type="match status" value="1"/>
</dbReference>
<dbReference type="Gene3D" id="2.60.40.4380">
    <property type="entry name" value="Translational regulator CsrA"/>
    <property type="match status" value="1"/>
</dbReference>
<dbReference type="HAMAP" id="MF_00167">
    <property type="entry name" value="CsrA"/>
    <property type="match status" value="1"/>
</dbReference>
<dbReference type="InterPro" id="IPR003751">
    <property type="entry name" value="CsrA"/>
</dbReference>
<dbReference type="InterPro" id="IPR036107">
    <property type="entry name" value="CsrA_sf"/>
</dbReference>
<dbReference type="NCBIfam" id="TIGR00202">
    <property type="entry name" value="csrA"/>
    <property type="match status" value="1"/>
</dbReference>
<dbReference type="NCBIfam" id="NF002469">
    <property type="entry name" value="PRK01712.1"/>
    <property type="match status" value="1"/>
</dbReference>
<dbReference type="PANTHER" id="PTHR34984">
    <property type="entry name" value="CARBON STORAGE REGULATOR"/>
    <property type="match status" value="1"/>
</dbReference>
<dbReference type="PANTHER" id="PTHR34984:SF1">
    <property type="entry name" value="CARBON STORAGE REGULATOR"/>
    <property type="match status" value="1"/>
</dbReference>
<dbReference type="Pfam" id="PF02599">
    <property type="entry name" value="CsrA"/>
    <property type="match status" value="1"/>
</dbReference>
<dbReference type="SUPFAM" id="SSF117130">
    <property type="entry name" value="CsrA-like"/>
    <property type="match status" value="1"/>
</dbReference>
<comment type="function">
    <text evidence="1">A key translational regulator that binds mRNA to regulate translation initiation and/or mRNA stability. Mediates global changes in gene expression, shifting from rapid growth to stress survival by linking envelope stress, the stringent response and the catabolite repression systems. Usually binds in the 5'-UTR; binding at or near the Shine-Dalgarno sequence prevents ribosome-binding, repressing translation, binding elsewhere in the 5'-UTR can activate translation and/or stabilize the mRNA. Its function is antagonized by small RNA(s).</text>
</comment>
<comment type="subunit">
    <text evidence="1">Homodimer; the beta-strands of each monomer intercalate to form a hydrophobic core, while the alpha-helices form wings that extend away from the core.</text>
</comment>
<comment type="subcellular location">
    <subcellularLocation>
        <location evidence="1">Cytoplasm</location>
    </subcellularLocation>
</comment>
<comment type="similarity">
    <text evidence="1">Belongs to the CsrA/RsmA family.</text>
</comment>
<gene>
    <name evidence="1" type="primary">csrA</name>
    <name type="ordered locus">SSON_2840</name>
</gene>
<sequence length="61" mass="6856">MLILTRRVGETLMIGDEVTVTVLGVKGNQVRIGVNAPKEVSVHREEIYQRIQAEKSQQSSY</sequence>
<proteinExistence type="inferred from homology"/>
<organism>
    <name type="scientific">Shigella sonnei (strain Ss046)</name>
    <dbReference type="NCBI Taxonomy" id="300269"/>
    <lineage>
        <taxon>Bacteria</taxon>
        <taxon>Pseudomonadati</taxon>
        <taxon>Pseudomonadota</taxon>
        <taxon>Gammaproteobacteria</taxon>
        <taxon>Enterobacterales</taxon>
        <taxon>Enterobacteriaceae</taxon>
        <taxon>Shigella</taxon>
    </lineage>
</organism>
<accession>Q3YYG7</accession>
<feature type="chain" id="PRO_1000023429" description="Translational regulator CsrA">
    <location>
        <begin position="1"/>
        <end position="61"/>
    </location>
</feature>
<keyword id="KW-0010">Activator</keyword>
<keyword id="KW-0963">Cytoplasm</keyword>
<keyword id="KW-1185">Reference proteome</keyword>
<keyword id="KW-0678">Repressor</keyword>
<keyword id="KW-0694">RNA-binding</keyword>
<keyword id="KW-0810">Translation regulation</keyword>
<reference key="1">
    <citation type="journal article" date="2005" name="Nucleic Acids Res.">
        <title>Genome dynamics and diversity of Shigella species, the etiologic agents of bacillary dysentery.</title>
        <authorList>
            <person name="Yang F."/>
            <person name="Yang J."/>
            <person name="Zhang X."/>
            <person name="Chen L."/>
            <person name="Jiang Y."/>
            <person name="Yan Y."/>
            <person name="Tang X."/>
            <person name="Wang J."/>
            <person name="Xiong Z."/>
            <person name="Dong J."/>
            <person name="Xue Y."/>
            <person name="Zhu Y."/>
            <person name="Xu X."/>
            <person name="Sun L."/>
            <person name="Chen S."/>
            <person name="Nie H."/>
            <person name="Peng J."/>
            <person name="Xu J."/>
            <person name="Wang Y."/>
            <person name="Yuan Z."/>
            <person name="Wen Y."/>
            <person name="Yao Z."/>
            <person name="Shen Y."/>
            <person name="Qiang B."/>
            <person name="Hou Y."/>
            <person name="Yu J."/>
            <person name="Jin Q."/>
        </authorList>
    </citation>
    <scope>NUCLEOTIDE SEQUENCE [LARGE SCALE GENOMIC DNA]</scope>
    <source>
        <strain>Ss046</strain>
    </source>
</reference>
<name>CSRA_SHISS</name>
<evidence type="ECO:0000255" key="1">
    <source>
        <dbReference type="HAMAP-Rule" id="MF_00167"/>
    </source>
</evidence>
<protein>
    <recommendedName>
        <fullName evidence="1">Translational regulator CsrA</fullName>
    </recommendedName>
    <alternativeName>
        <fullName evidence="1">Carbon storage regulator</fullName>
    </alternativeName>
</protein>